<sequence length="282" mass="31915">MDRTLESLRHIIAQALPHRDPALVFKDLNVVSMLQEFWESKQQQKATFSSEGLVVYESMPSSGPPFVSYVTLPGGSCFGNFQCCLSRAEARRDAAKVALINSLFNELPSRRITKEFIMESVQEAVASTRGTLDDADDPSTSVGAYHYMLESNMGKTMLEFQELMTIFQLLHWNGSLKALRETKCSRQEVISYYSQYSLDEKMRSHMALDWIMKERESPGILSQELRAALGQLEEARKAGQELRFYKEKKEILSLALTQIYSDPDPSSPSDDQLSLTALCGYH</sequence>
<protein>
    <recommendedName>
        <fullName>Protein limb expression 1 homolog</fullName>
    </recommendedName>
</protein>
<feature type="chain" id="PRO_0000232870" description="Protein limb expression 1 homolog">
    <location>
        <begin position="1"/>
        <end position="282"/>
    </location>
</feature>
<feature type="sequence conflict" description="In Ref. 1; AAL67190." evidence="1" ref="1">
    <original>D</original>
    <variation>G</variation>
    <location>
        <position position="199"/>
    </location>
</feature>
<comment type="similarity">
    <text evidence="1">Belongs to the LIX1 family.</text>
</comment>
<comment type="sequence caution" evidence="1">
    <conflict type="frameshift">
        <sequence resource="EMBL-CDS" id="BAB30873"/>
    </conflict>
</comment>
<name>LIX1_MOUSE</name>
<gene>
    <name type="primary">Lix1</name>
</gene>
<proteinExistence type="evidence at transcript level"/>
<reference key="1">
    <citation type="journal article" date="2001" name="Mech. Dev.">
        <title>Cloning and expression analysis of chicken Lix1, a founding member of a novel gene family.</title>
        <authorList>
            <person name="Swindell E.C."/>
            <person name="Moeller C."/>
            <person name="Thaller C."/>
            <person name="Eichele G."/>
        </authorList>
    </citation>
    <scope>NUCLEOTIDE SEQUENCE [MRNA]</scope>
</reference>
<reference key="2">
    <citation type="journal article" date="2005" name="Science">
        <title>The transcriptional landscape of the mammalian genome.</title>
        <authorList>
            <person name="Carninci P."/>
            <person name="Kasukawa T."/>
            <person name="Katayama S."/>
            <person name="Gough J."/>
            <person name="Frith M.C."/>
            <person name="Maeda N."/>
            <person name="Oyama R."/>
            <person name="Ravasi T."/>
            <person name="Lenhard B."/>
            <person name="Wells C."/>
            <person name="Kodzius R."/>
            <person name="Shimokawa K."/>
            <person name="Bajic V.B."/>
            <person name="Brenner S.E."/>
            <person name="Batalov S."/>
            <person name="Forrest A.R."/>
            <person name="Zavolan M."/>
            <person name="Davis M.J."/>
            <person name="Wilming L.G."/>
            <person name="Aidinis V."/>
            <person name="Allen J.E."/>
            <person name="Ambesi-Impiombato A."/>
            <person name="Apweiler R."/>
            <person name="Aturaliya R.N."/>
            <person name="Bailey T.L."/>
            <person name="Bansal M."/>
            <person name="Baxter L."/>
            <person name="Beisel K.W."/>
            <person name="Bersano T."/>
            <person name="Bono H."/>
            <person name="Chalk A.M."/>
            <person name="Chiu K.P."/>
            <person name="Choudhary V."/>
            <person name="Christoffels A."/>
            <person name="Clutterbuck D.R."/>
            <person name="Crowe M.L."/>
            <person name="Dalla E."/>
            <person name="Dalrymple B.P."/>
            <person name="de Bono B."/>
            <person name="Della Gatta G."/>
            <person name="di Bernardo D."/>
            <person name="Down T."/>
            <person name="Engstrom P."/>
            <person name="Fagiolini M."/>
            <person name="Faulkner G."/>
            <person name="Fletcher C.F."/>
            <person name="Fukushima T."/>
            <person name="Furuno M."/>
            <person name="Futaki S."/>
            <person name="Gariboldi M."/>
            <person name="Georgii-Hemming P."/>
            <person name="Gingeras T.R."/>
            <person name="Gojobori T."/>
            <person name="Green R.E."/>
            <person name="Gustincich S."/>
            <person name="Harbers M."/>
            <person name="Hayashi Y."/>
            <person name="Hensch T.K."/>
            <person name="Hirokawa N."/>
            <person name="Hill D."/>
            <person name="Huminiecki L."/>
            <person name="Iacono M."/>
            <person name="Ikeo K."/>
            <person name="Iwama A."/>
            <person name="Ishikawa T."/>
            <person name="Jakt M."/>
            <person name="Kanapin A."/>
            <person name="Katoh M."/>
            <person name="Kawasawa Y."/>
            <person name="Kelso J."/>
            <person name="Kitamura H."/>
            <person name="Kitano H."/>
            <person name="Kollias G."/>
            <person name="Krishnan S.P."/>
            <person name="Kruger A."/>
            <person name="Kummerfeld S.K."/>
            <person name="Kurochkin I.V."/>
            <person name="Lareau L.F."/>
            <person name="Lazarevic D."/>
            <person name="Lipovich L."/>
            <person name="Liu J."/>
            <person name="Liuni S."/>
            <person name="McWilliam S."/>
            <person name="Madan Babu M."/>
            <person name="Madera M."/>
            <person name="Marchionni L."/>
            <person name="Matsuda H."/>
            <person name="Matsuzawa S."/>
            <person name="Miki H."/>
            <person name="Mignone F."/>
            <person name="Miyake S."/>
            <person name="Morris K."/>
            <person name="Mottagui-Tabar S."/>
            <person name="Mulder N."/>
            <person name="Nakano N."/>
            <person name="Nakauchi H."/>
            <person name="Ng P."/>
            <person name="Nilsson R."/>
            <person name="Nishiguchi S."/>
            <person name="Nishikawa S."/>
            <person name="Nori F."/>
            <person name="Ohara O."/>
            <person name="Okazaki Y."/>
            <person name="Orlando V."/>
            <person name="Pang K.C."/>
            <person name="Pavan W.J."/>
            <person name="Pavesi G."/>
            <person name="Pesole G."/>
            <person name="Petrovsky N."/>
            <person name="Piazza S."/>
            <person name="Reed J."/>
            <person name="Reid J.F."/>
            <person name="Ring B.Z."/>
            <person name="Ringwald M."/>
            <person name="Rost B."/>
            <person name="Ruan Y."/>
            <person name="Salzberg S.L."/>
            <person name="Sandelin A."/>
            <person name="Schneider C."/>
            <person name="Schoenbach C."/>
            <person name="Sekiguchi K."/>
            <person name="Semple C.A."/>
            <person name="Seno S."/>
            <person name="Sessa L."/>
            <person name="Sheng Y."/>
            <person name="Shibata Y."/>
            <person name="Shimada H."/>
            <person name="Shimada K."/>
            <person name="Silva D."/>
            <person name="Sinclair B."/>
            <person name="Sperling S."/>
            <person name="Stupka E."/>
            <person name="Sugiura K."/>
            <person name="Sultana R."/>
            <person name="Takenaka Y."/>
            <person name="Taki K."/>
            <person name="Tammoja K."/>
            <person name="Tan S.L."/>
            <person name="Tang S."/>
            <person name="Taylor M.S."/>
            <person name="Tegner J."/>
            <person name="Teichmann S.A."/>
            <person name="Ueda H.R."/>
            <person name="van Nimwegen E."/>
            <person name="Verardo R."/>
            <person name="Wei C.L."/>
            <person name="Yagi K."/>
            <person name="Yamanishi H."/>
            <person name="Zabarovsky E."/>
            <person name="Zhu S."/>
            <person name="Zimmer A."/>
            <person name="Hide W."/>
            <person name="Bult C."/>
            <person name="Grimmond S.M."/>
            <person name="Teasdale R.D."/>
            <person name="Liu E.T."/>
            <person name="Brusic V."/>
            <person name="Quackenbush J."/>
            <person name="Wahlestedt C."/>
            <person name="Mattick J.S."/>
            <person name="Hume D.A."/>
            <person name="Kai C."/>
            <person name="Sasaki D."/>
            <person name="Tomaru Y."/>
            <person name="Fukuda S."/>
            <person name="Kanamori-Katayama M."/>
            <person name="Suzuki M."/>
            <person name="Aoki J."/>
            <person name="Arakawa T."/>
            <person name="Iida J."/>
            <person name="Imamura K."/>
            <person name="Itoh M."/>
            <person name="Kato T."/>
            <person name="Kawaji H."/>
            <person name="Kawagashira N."/>
            <person name="Kawashima T."/>
            <person name="Kojima M."/>
            <person name="Kondo S."/>
            <person name="Konno H."/>
            <person name="Nakano K."/>
            <person name="Ninomiya N."/>
            <person name="Nishio T."/>
            <person name="Okada M."/>
            <person name="Plessy C."/>
            <person name="Shibata K."/>
            <person name="Shiraki T."/>
            <person name="Suzuki S."/>
            <person name="Tagami M."/>
            <person name="Waki K."/>
            <person name="Watahiki A."/>
            <person name="Okamura-Oho Y."/>
            <person name="Suzuki H."/>
            <person name="Kawai J."/>
            <person name="Hayashizaki Y."/>
        </authorList>
    </citation>
    <scope>NUCLEOTIDE SEQUENCE [LARGE SCALE MRNA]</scope>
    <source>
        <strain>C57BL/6J</strain>
        <tissue>Embryo</tissue>
    </source>
</reference>
<reference key="3">
    <citation type="journal article" date="2004" name="Genome Res.">
        <title>The status, quality, and expansion of the NIH full-length cDNA project: the Mammalian Gene Collection (MGC).</title>
        <authorList>
            <consortium name="The MGC Project Team"/>
        </authorList>
    </citation>
    <scope>NUCLEOTIDE SEQUENCE [LARGE SCALE MRNA]</scope>
    <source>
        <strain>C57BL/6J</strain>
        <tissue>Brain</tissue>
    </source>
</reference>
<keyword id="KW-1185">Reference proteome</keyword>
<dbReference type="EMBL" id="AF351204">
    <property type="protein sequence ID" value="AAL67190.1"/>
    <property type="molecule type" value="mRNA"/>
</dbReference>
<dbReference type="EMBL" id="AK017685">
    <property type="protein sequence ID" value="BAB30873.1"/>
    <property type="status" value="ALT_FRAME"/>
    <property type="molecule type" value="mRNA"/>
</dbReference>
<dbReference type="EMBL" id="BC063057">
    <property type="protein sequence ID" value="AAH63057.1"/>
    <property type="molecule type" value="mRNA"/>
</dbReference>
<dbReference type="EMBL" id="BC049574">
    <property type="protein sequence ID" value="AAH49574.1"/>
    <property type="molecule type" value="mRNA"/>
</dbReference>
<dbReference type="CCDS" id="CCDS37456.1"/>
<dbReference type="RefSeq" id="NP_079957.2">
    <property type="nucleotide sequence ID" value="NM_025681.2"/>
</dbReference>
<dbReference type="SMR" id="Q6P566"/>
<dbReference type="FunCoup" id="Q6P566">
    <property type="interactions" value="390"/>
</dbReference>
<dbReference type="STRING" id="10090.ENSMUSP00000111239"/>
<dbReference type="iPTMnet" id="Q6P566"/>
<dbReference type="PhosphoSitePlus" id="Q6P566"/>
<dbReference type="jPOST" id="Q6P566"/>
<dbReference type="PaxDb" id="10090-ENSMUSP00000111239"/>
<dbReference type="ProteomicsDB" id="292266"/>
<dbReference type="Antibodypedia" id="25115">
    <property type="antibodies" value="168 antibodies from 21 providers"/>
</dbReference>
<dbReference type="DNASU" id="66643"/>
<dbReference type="Ensembl" id="ENSMUST00000115576.3">
    <property type="protein sequence ID" value="ENSMUSP00000111239.3"/>
    <property type="gene ID" value="ENSMUSG00000047786.13"/>
</dbReference>
<dbReference type="GeneID" id="66643"/>
<dbReference type="KEGG" id="mmu:66643"/>
<dbReference type="UCSC" id="uc008apg.2">
    <property type="organism name" value="mouse"/>
</dbReference>
<dbReference type="AGR" id="MGI:1913893"/>
<dbReference type="CTD" id="167410"/>
<dbReference type="MGI" id="MGI:1913893">
    <property type="gene designation" value="Lix1"/>
</dbReference>
<dbReference type="VEuPathDB" id="HostDB:ENSMUSG00000047786"/>
<dbReference type="eggNOG" id="ENOG502QR91">
    <property type="taxonomic scope" value="Eukaryota"/>
</dbReference>
<dbReference type="GeneTree" id="ENSGT00390000005869"/>
<dbReference type="HOGENOM" id="CLU_065651_1_1_1"/>
<dbReference type="InParanoid" id="Q6P566"/>
<dbReference type="OMA" id="AMLQEFW"/>
<dbReference type="OrthoDB" id="6250996at2759"/>
<dbReference type="PhylomeDB" id="Q6P566"/>
<dbReference type="TreeFam" id="TF324035"/>
<dbReference type="BioGRID-ORCS" id="66643">
    <property type="hits" value="5 hits in 76 CRISPR screens"/>
</dbReference>
<dbReference type="ChiTaRS" id="Lix1">
    <property type="organism name" value="mouse"/>
</dbReference>
<dbReference type="PRO" id="PR:Q6P566"/>
<dbReference type="Proteomes" id="UP000000589">
    <property type="component" value="Chromosome 17"/>
</dbReference>
<dbReference type="RNAct" id="Q6P566">
    <property type="molecule type" value="protein"/>
</dbReference>
<dbReference type="Bgee" id="ENSMUSG00000047786">
    <property type="expression patterns" value="Expressed in lens of camera-type eye and 125 other cell types or tissues"/>
</dbReference>
<dbReference type="ExpressionAtlas" id="Q6P566">
    <property type="expression patterns" value="baseline and differential"/>
</dbReference>
<dbReference type="InterPro" id="IPR051436">
    <property type="entry name" value="Autophagy-related_EPG5"/>
</dbReference>
<dbReference type="InterPro" id="IPR029270">
    <property type="entry name" value="LIX1"/>
</dbReference>
<dbReference type="PANTHER" id="PTHR31139">
    <property type="entry name" value="ECTOPIC P GRANULES PROTEIN 5 HOMOLOG"/>
    <property type="match status" value="1"/>
</dbReference>
<dbReference type="PANTHER" id="PTHR31139:SF5">
    <property type="entry name" value="PROTEIN LIMB EXPRESSION 1 HOMOLOG"/>
    <property type="match status" value="1"/>
</dbReference>
<dbReference type="Pfam" id="PF14954">
    <property type="entry name" value="LIX1"/>
    <property type="match status" value="1"/>
</dbReference>
<accession>Q6P566</accession>
<accession>Q8VHY1</accession>
<accession>Q9CYH4</accession>
<evidence type="ECO:0000305" key="1"/>
<organism>
    <name type="scientific">Mus musculus</name>
    <name type="common">Mouse</name>
    <dbReference type="NCBI Taxonomy" id="10090"/>
    <lineage>
        <taxon>Eukaryota</taxon>
        <taxon>Metazoa</taxon>
        <taxon>Chordata</taxon>
        <taxon>Craniata</taxon>
        <taxon>Vertebrata</taxon>
        <taxon>Euteleostomi</taxon>
        <taxon>Mammalia</taxon>
        <taxon>Eutheria</taxon>
        <taxon>Euarchontoglires</taxon>
        <taxon>Glires</taxon>
        <taxon>Rodentia</taxon>
        <taxon>Myomorpha</taxon>
        <taxon>Muroidea</taxon>
        <taxon>Muridae</taxon>
        <taxon>Murinae</taxon>
        <taxon>Mus</taxon>
        <taxon>Mus</taxon>
    </lineage>
</organism>